<feature type="chain" id="PRO_0000090551" description="L-rhamnose isomerase">
    <location>
        <begin position="1"/>
        <end position="418"/>
    </location>
</feature>
<feature type="binding site" evidence="1">
    <location>
        <position position="262"/>
    </location>
    <ligand>
        <name>Mn(2+)</name>
        <dbReference type="ChEBI" id="CHEBI:29035"/>
    </ligand>
</feature>
<feature type="binding site" evidence="1">
    <location>
        <position position="294"/>
    </location>
    <ligand>
        <name>Mn(2+)</name>
        <dbReference type="ChEBI" id="CHEBI:29035"/>
    </ligand>
</feature>
<feature type="binding site" evidence="1">
    <location>
        <position position="296"/>
    </location>
    <ligand>
        <name>Mn(2+)</name>
        <dbReference type="ChEBI" id="CHEBI:29035"/>
    </ligand>
</feature>
<proteinExistence type="inferred from homology"/>
<reference key="1">
    <citation type="journal article" date="2003" name="Science">
        <title>A genomic view of the human-Bacteroides thetaiotaomicron symbiosis.</title>
        <authorList>
            <person name="Xu J."/>
            <person name="Bjursell M.K."/>
            <person name="Himrod J."/>
            <person name="Deng S."/>
            <person name="Carmichael L.K."/>
            <person name="Chiang H.C."/>
            <person name="Hooper L.V."/>
            <person name="Gordon J.I."/>
        </authorList>
    </citation>
    <scope>NUCLEOTIDE SEQUENCE [LARGE SCALE GENOMIC DNA]</scope>
    <source>
        <strain>ATCC 29148 / DSM 2079 / JCM 5827 / CCUG 10774 / NCTC 10582 / VPI-5482 / E50</strain>
    </source>
</reference>
<gene>
    <name evidence="1" type="primary">rhaA</name>
    <name type="ordered locus">BT_3764</name>
</gene>
<dbReference type="EC" id="5.3.1.14" evidence="1"/>
<dbReference type="EMBL" id="AE015928">
    <property type="protein sequence ID" value="AAO78869.1"/>
    <property type="molecule type" value="Genomic_DNA"/>
</dbReference>
<dbReference type="RefSeq" id="NP_812675.1">
    <property type="nucleotide sequence ID" value="NC_004663.1"/>
</dbReference>
<dbReference type="RefSeq" id="WP_010536410.1">
    <property type="nucleotide sequence ID" value="NC_004663.1"/>
</dbReference>
<dbReference type="SMR" id="Q8A1A2"/>
<dbReference type="FunCoup" id="Q8A1A2">
    <property type="interactions" value="63"/>
</dbReference>
<dbReference type="STRING" id="226186.BT_3764"/>
<dbReference type="PaxDb" id="226186-BT_3764"/>
<dbReference type="EnsemblBacteria" id="AAO78869">
    <property type="protein sequence ID" value="AAO78869"/>
    <property type="gene ID" value="BT_3764"/>
</dbReference>
<dbReference type="KEGG" id="bth:BT_3764"/>
<dbReference type="PATRIC" id="fig|226186.12.peg.3826"/>
<dbReference type="eggNOG" id="COG4806">
    <property type="taxonomic scope" value="Bacteria"/>
</dbReference>
<dbReference type="HOGENOM" id="CLU_052790_0_0_10"/>
<dbReference type="InParanoid" id="Q8A1A2"/>
<dbReference type="OrthoDB" id="9766697at2"/>
<dbReference type="UniPathway" id="UPA00541">
    <property type="reaction ID" value="UER00601"/>
</dbReference>
<dbReference type="Proteomes" id="UP000001414">
    <property type="component" value="Chromosome"/>
</dbReference>
<dbReference type="GO" id="GO:0005737">
    <property type="term" value="C:cytoplasm"/>
    <property type="evidence" value="ECO:0007669"/>
    <property type="project" value="UniProtKB-SubCell"/>
</dbReference>
<dbReference type="GO" id="GO:0008740">
    <property type="term" value="F:L-rhamnose isomerase activity"/>
    <property type="evidence" value="ECO:0000318"/>
    <property type="project" value="GO_Central"/>
</dbReference>
<dbReference type="GO" id="GO:0030145">
    <property type="term" value="F:manganese ion binding"/>
    <property type="evidence" value="ECO:0007669"/>
    <property type="project" value="UniProtKB-UniRule"/>
</dbReference>
<dbReference type="GO" id="GO:0019324">
    <property type="term" value="P:L-lyxose metabolic process"/>
    <property type="evidence" value="ECO:0000318"/>
    <property type="project" value="GO_Central"/>
</dbReference>
<dbReference type="GO" id="GO:0019301">
    <property type="term" value="P:rhamnose catabolic process"/>
    <property type="evidence" value="ECO:0000318"/>
    <property type="project" value="GO_Central"/>
</dbReference>
<dbReference type="FunFam" id="3.20.20.150:FF:000006">
    <property type="entry name" value="L-rhamnose isomerase"/>
    <property type="match status" value="1"/>
</dbReference>
<dbReference type="Gene3D" id="3.20.20.150">
    <property type="entry name" value="Divalent-metal-dependent TIM barrel enzymes"/>
    <property type="match status" value="1"/>
</dbReference>
<dbReference type="HAMAP" id="MF_00541">
    <property type="entry name" value="RhaA"/>
    <property type="match status" value="1"/>
</dbReference>
<dbReference type="InterPro" id="IPR050337">
    <property type="entry name" value="L-rhamnose_isomerase"/>
</dbReference>
<dbReference type="InterPro" id="IPR009308">
    <property type="entry name" value="Rhamnose_isomerase"/>
</dbReference>
<dbReference type="InterPro" id="IPR036237">
    <property type="entry name" value="Xyl_isomerase-like_sf"/>
</dbReference>
<dbReference type="NCBIfam" id="NF002203">
    <property type="entry name" value="PRK01076.1"/>
    <property type="match status" value="1"/>
</dbReference>
<dbReference type="PANTHER" id="PTHR30268">
    <property type="entry name" value="L-RHAMNOSE ISOMERASE"/>
    <property type="match status" value="1"/>
</dbReference>
<dbReference type="PANTHER" id="PTHR30268:SF0">
    <property type="entry name" value="L-RHAMNOSE ISOMERASE"/>
    <property type="match status" value="1"/>
</dbReference>
<dbReference type="Pfam" id="PF06134">
    <property type="entry name" value="RhaA"/>
    <property type="match status" value="1"/>
</dbReference>
<dbReference type="SUPFAM" id="SSF51658">
    <property type="entry name" value="Xylose isomerase-like"/>
    <property type="match status" value="1"/>
</dbReference>
<accession>Q8A1A2</accession>
<name>RHAA_BACTN</name>
<protein>
    <recommendedName>
        <fullName evidence="1">L-rhamnose isomerase</fullName>
        <ecNumber evidence="1">5.3.1.14</ecNumber>
    </recommendedName>
</protein>
<evidence type="ECO:0000255" key="1">
    <source>
        <dbReference type="HAMAP-Rule" id="MF_00541"/>
    </source>
</evidence>
<sequence>MKKEEMIQKAYEIAVERYAAVGVDTEKVLKTMQDFHLSLHCWQADDVTGFEVQAGALSGGIQATGNYPGKARNIDELRADILKAASYIPGTHRLNLHEIYGDFQGKVVDRDQVEPEHFKSWIEWGKEHNMKLDFNSTSFSHPKSGDLSLSNPDEGIRQFWIEHTKRCRAVAEEMGKAQGDPCIMNLWVHDGSKDITVNRMKYRALLKDSLDQIFATEYKNMKDCIESKVFGIGLESYTVGSNDFYIGYGASRNKMVTLDTGHFHPTESVADKVSSLLLYVPELMLHVSRPVRWDSDHVTIMDDPTMELFSEIVRCGALERVHYGLDYFDASINRIGAYVIGSRAAQKCMTRALLEPIAKLREYEANGQGFQRLALLEEEKALPWNAVWDMFCLKNNVPVGEDFIAEIEKYEAEVTSKR</sequence>
<comment type="function">
    <text evidence="1">Catalyzes the interconversion of L-rhamnose and L-rhamnulose.</text>
</comment>
<comment type="catalytic activity">
    <reaction evidence="1">
        <text>L-rhamnopyranose = L-rhamnulose</text>
        <dbReference type="Rhea" id="RHEA:23160"/>
        <dbReference type="ChEBI" id="CHEBI:17897"/>
        <dbReference type="ChEBI" id="CHEBI:62346"/>
        <dbReference type="EC" id="5.3.1.14"/>
    </reaction>
</comment>
<comment type="cofactor">
    <cofactor evidence="1">
        <name>Mn(2+)</name>
        <dbReference type="ChEBI" id="CHEBI:29035"/>
    </cofactor>
    <text evidence="1">Binds 1 Mn(2+) ion per subunit.</text>
</comment>
<comment type="pathway">
    <text evidence="1">Carbohydrate degradation; L-rhamnose degradation; glycerone phosphate from L-rhamnose: step 1/3.</text>
</comment>
<comment type="subcellular location">
    <subcellularLocation>
        <location evidence="1">Cytoplasm</location>
    </subcellularLocation>
</comment>
<comment type="similarity">
    <text evidence="1">Belongs to the rhamnose isomerase family.</text>
</comment>
<keyword id="KW-0963">Cytoplasm</keyword>
<keyword id="KW-0413">Isomerase</keyword>
<keyword id="KW-0464">Manganese</keyword>
<keyword id="KW-0479">Metal-binding</keyword>
<keyword id="KW-1185">Reference proteome</keyword>
<keyword id="KW-0684">Rhamnose metabolism</keyword>
<organism>
    <name type="scientific">Bacteroides thetaiotaomicron (strain ATCC 29148 / DSM 2079 / JCM 5827 / CCUG 10774 / NCTC 10582 / VPI-5482 / E50)</name>
    <dbReference type="NCBI Taxonomy" id="226186"/>
    <lineage>
        <taxon>Bacteria</taxon>
        <taxon>Pseudomonadati</taxon>
        <taxon>Bacteroidota</taxon>
        <taxon>Bacteroidia</taxon>
        <taxon>Bacteroidales</taxon>
        <taxon>Bacteroidaceae</taxon>
        <taxon>Bacteroides</taxon>
    </lineage>
</organism>